<gene>
    <name evidence="1" type="primary">rnhA</name>
    <name type="ordered locus">CBU_0316</name>
</gene>
<name>RNH_COXBU</name>
<dbReference type="EC" id="3.1.26.4" evidence="1"/>
<dbReference type="EMBL" id="AE016828">
    <property type="protein sequence ID" value="AAO89873.1"/>
    <property type="molecule type" value="Genomic_DNA"/>
</dbReference>
<dbReference type="RefSeq" id="NP_819359.1">
    <property type="nucleotide sequence ID" value="NC_002971.3"/>
</dbReference>
<dbReference type="RefSeq" id="WP_010957501.1">
    <property type="nucleotide sequence ID" value="NC_002971.4"/>
</dbReference>
<dbReference type="SMR" id="Q83EK3"/>
<dbReference type="STRING" id="227377.CBU_0316"/>
<dbReference type="EnsemblBacteria" id="AAO89873">
    <property type="protein sequence ID" value="AAO89873"/>
    <property type="gene ID" value="CBU_0316"/>
</dbReference>
<dbReference type="GeneID" id="1208198"/>
<dbReference type="KEGG" id="cbu:CBU_0316"/>
<dbReference type="PATRIC" id="fig|227377.7.peg.309"/>
<dbReference type="eggNOG" id="COG0328">
    <property type="taxonomic scope" value="Bacteria"/>
</dbReference>
<dbReference type="HOGENOM" id="CLU_030894_6_0_6"/>
<dbReference type="OrthoDB" id="7845843at2"/>
<dbReference type="Proteomes" id="UP000002671">
    <property type="component" value="Chromosome"/>
</dbReference>
<dbReference type="GO" id="GO:0005737">
    <property type="term" value="C:cytoplasm"/>
    <property type="evidence" value="ECO:0007669"/>
    <property type="project" value="UniProtKB-SubCell"/>
</dbReference>
<dbReference type="GO" id="GO:0000287">
    <property type="term" value="F:magnesium ion binding"/>
    <property type="evidence" value="ECO:0007669"/>
    <property type="project" value="UniProtKB-UniRule"/>
</dbReference>
<dbReference type="GO" id="GO:0003676">
    <property type="term" value="F:nucleic acid binding"/>
    <property type="evidence" value="ECO:0007669"/>
    <property type="project" value="InterPro"/>
</dbReference>
<dbReference type="GO" id="GO:0004523">
    <property type="term" value="F:RNA-DNA hybrid ribonuclease activity"/>
    <property type="evidence" value="ECO:0000318"/>
    <property type="project" value="GO_Central"/>
</dbReference>
<dbReference type="GO" id="GO:0043137">
    <property type="term" value="P:DNA replication, removal of RNA primer"/>
    <property type="evidence" value="ECO:0000318"/>
    <property type="project" value="GO_Central"/>
</dbReference>
<dbReference type="CDD" id="cd09278">
    <property type="entry name" value="RNase_HI_prokaryote_like"/>
    <property type="match status" value="1"/>
</dbReference>
<dbReference type="FunFam" id="3.30.420.10:FF:000089">
    <property type="entry name" value="Ribonuclease H"/>
    <property type="match status" value="1"/>
</dbReference>
<dbReference type="Gene3D" id="3.30.420.10">
    <property type="entry name" value="Ribonuclease H-like superfamily/Ribonuclease H"/>
    <property type="match status" value="1"/>
</dbReference>
<dbReference type="HAMAP" id="MF_00042">
    <property type="entry name" value="RNase_H"/>
    <property type="match status" value="1"/>
</dbReference>
<dbReference type="InterPro" id="IPR050092">
    <property type="entry name" value="RNase_H"/>
</dbReference>
<dbReference type="InterPro" id="IPR012337">
    <property type="entry name" value="RNaseH-like_sf"/>
</dbReference>
<dbReference type="InterPro" id="IPR002156">
    <property type="entry name" value="RNaseH_domain"/>
</dbReference>
<dbReference type="InterPro" id="IPR036397">
    <property type="entry name" value="RNaseH_sf"/>
</dbReference>
<dbReference type="InterPro" id="IPR022892">
    <property type="entry name" value="RNaseHI"/>
</dbReference>
<dbReference type="NCBIfam" id="NF001236">
    <property type="entry name" value="PRK00203.1"/>
    <property type="match status" value="1"/>
</dbReference>
<dbReference type="PANTHER" id="PTHR10642">
    <property type="entry name" value="RIBONUCLEASE H1"/>
    <property type="match status" value="1"/>
</dbReference>
<dbReference type="PANTHER" id="PTHR10642:SF26">
    <property type="entry name" value="RIBONUCLEASE H1"/>
    <property type="match status" value="1"/>
</dbReference>
<dbReference type="Pfam" id="PF00075">
    <property type="entry name" value="RNase_H"/>
    <property type="match status" value="1"/>
</dbReference>
<dbReference type="SUPFAM" id="SSF53098">
    <property type="entry name" value="Ribonuclease H-like"/>
    <property type="match status" value="1"/>
</dbReference>
<dbReference type="PROSITE" id="PS50879">
    <property type="entry name" value="RNASE_H_1"/>
    <property type="match status" value="1"/>
</dbReference>
<organism>
    <name type="scientific">Coxiella burnetii (strain RSA 493 / Nine Mile phase I)</name>
    <dbReference type="NCBI Taxonomy" id="227377"/>
    <lineage>
        <taxon>Bacteria</taxon>
        <taxon>Pseudomonadati</taxon>
        <taxon>Pseudomonadota</taxon>
        <taxon>Gammaproteobacteria</taxon>
        <taxon>Legionellales</taxon>
        <taxon>Coxiellaceae</taxon>
        <taxon>Coxiella</taxon>
    </lineage>
</organism>
<reference key="1">
    <citation type="journal article" date="2003" name="Proc. Natl. Acad. Sci. U.S.A.">
        <title>Complete genome sequence of the Q-fever pathogen, Coxiella burnetii.</title>
        <authorList>
            <person name="Seshadri R."/>
            <person name="Paulsen I.T."/>
            <person name="Eisen J.A."/>
            <person name="Read T.D."/>
            <person name="Nelson K.E."/>
            <person name="Nelson W.C."/>
            <person name="Ward N.L."/>
            <person name="Tettelin H."/>
            <person name="Davidsen T.M."/>
            <person name="Beanan M.J."/>
            <person name="DeBoy R.T."/>
            <person name="Daugherty S.C."/>
            <person name="Brinkac L.M."/>
            <person name="Madupu R."/>
            <person name="Dodson R.J."/>
            <person name="Khouri H.M."/>
            <person name="Lee K.H."/>
            <person name="Carty H.A."/>
            <person name="Scanlan D."/>
            <person name="Heinzen R.A."/>
            <person name="Thompson H.A."/>
            <person name="Samuel J.E."/>
            <person name="Fraser C.M."/>
            <person name="Heidelberg J.F."/>
        </authorList>
    </citation>
    <scope>NUCLEOTIDE SEQUENCE [LARGE SCALE GENOMIC DNA]</scope>
    <source>
        <strain>RSA 493 / Nine Mile phase I</strain>
    </source>
</reference>
<proteinExistence type="inferred from homology"/>
<feature type="chain" id="PRO_0000332584" description="Ribonuclease H">
    <location>
        <begin position="1"/>
        <end position="154"/>
    </location>
</feature>
<feature type="domain" description="RNase H type-1" evidence="2">
    <location>
        <begin position="5"/>
        <end position="146"/>
    </location>
</feature>
<feature type="binding site" evidence="1">
    <location>
        <position position="14"/>
    </location>
    <ligand>
        <name>Mg(2+)</name>
        <dbReference type="ChEBI" id="CHEBI:18420"/>
        <label>1</label>
    </ligand>
</feature>
<feature type="binding site" evidence="1">
    <location>
        <position position="14"/>
    </location>
    <ligand>
        <name>Mg(2+)</name>
        <dbReference type="ChEBI" id="CHEBI:18420"/>
        <label>2</label>
    </ligand>
</feature>
<feature type="binding site" evidence="1">
    <location>
        <position position="52"/>
    </location>
    <ligand>
        <name>Mg(2+)</name>
        <dbReference type="ChEBI" id="CHEBI:18420"/>
        <label>1</label>
    </ligand>
</feature>
<feature type="binding site" evidence="1">
    <location>
        <position position="74"/>
    </location>
    <ligand>
        <name>Mg(2+)</name>
        <dbReference type="ChEBI" id="CHEBI:18420"/>
        <label>1</label>
    </ligand>
</feature>
<feature type="binding site" evidence="1">
    <location>
        <position position="138"/>
    </location>
    <ligand>
        <name>Mg(2+)</name>
        <dbReference type="ChEBI" id="CHEBI:18420"/>
        <label>2</label>
    </ligand>
</feature>
<comment type="function">
    <text evidence="1">Endonuclease that specifically degrades the RNA of RNA-DNA hybrids.</text>
</comment>
<comment type="catalytic activity">
    <reaction evidence="1">
        <text>Endonucleolytic cleavage to 5'-phosphomonoester.</text>
        <dbReference type="EC" id="3.1.26.4"/>
    </reaction>
</comment>
<comment type="cofactor">
    <cofactor evidence="1">
        <name>Mg(2+)</name>
        <dbReference type="ChEBI" id="CHEBI:18420"/>
    </cofactor>
    <text evidence="1">Binds 1 Mg(2+) ion per subunit. May bind a second metal ion at a regulatory site, or after substrate binding.</text>
</comment>
<comment type="subunit">
    <text evidence="1">Monomer.</text>
</comment>
<comment type="subcellular location">
    <subcellularLocation>
        <location evidence="1">Cytoplasm</location>
    </subcellularLocation>
</comment>
<comment type="similarity">
    <text evidence="1">Belongs to the RNase H family.</text>
</comment>
<accession>Q83EK3</accession>
<evidence type="ECO:0000255" key="1">
    <source>
        <dbReference type="HAMAP-Rule" id="MF_00042"/>
    </source>
</evidence>
<evidence type="ECO:0000255" key="2">
    <source>
        <dbReference type="PROSITE-ProRule" id="PRU00408"/>
    </source>
</evidence>
<protein>
    <recommendedName>
        <fullName evidence="1">Ribonuclease H</fullName>
        <shortName evidence="1">RNase H</shortName>
        <ecNumber evidence="1">3.1.26.4</ecNumber>
    </recommendedName>
</protein>
<sequence length="154" mass="17662">MAKQEQNIVYLYCDGACRGNPGPGGWGVLLRYNQHERQLHGGVANTTNNQMELTAAIEGLKSLKKPCQVVVTTDSQYLRRGITEWLPVWKRRGWRTSNKKPVKNQPLWETLEREVERHTIVWHWVKGHSGHAENEIADELANRGIDEVLKRGVQ</sequence>
<keyword id="KW-0963">Cytoplasm</keyword>
<keyword id="KW-0255">Endonuclease</keyword>
<keyword id="KW-0378">Hydrolase</keyword>
<keyword id="KW-0460">Magnesium</keyword>
<keyword id="KW-0479">Metal-binding</keyword>
<keyword id="KW-0540">Nuclease</keyword>
<keyword id="KW-1185">Reference proteome</keyword>